<comment type="function">
    <text evidence="1 2">May be involved in early liver development.</text>
</comment>
<comment type="subcellular location">
    <subcellularLocation>
        <location evidence="1 2">Secreted</location>
    </subcellularLocation>
</comment>
<comment type="similarity">
    <text evidence="4">Belongs to the LEG1 family.</text>
</comment>
<comment type="sequence caution" evidence="4">
    <conflict type="erroneous initiation">
        <sequence resource="EMBL-CDS" id="AAH21783"/>
    </conflict>
    <text>Truncated N-terminus.</text>
</comment>
<comment type="sequence caution" evidence="4">
    <conflict type="erroneous initiation">
        <sequence resource="EMBL-CDS" id="BAB26311"/>
    </conflict>
    <text>Truncated N-terminus.</text>
</comment>
<comment type="sequence caution" evidence="4">
    <conflict type="erroneous initiation">
        <sequence resource="EMBL-CDS" id="BAB26664"/>
    </conflict>
    <text>Truncated N-terminus.</text>
</comment>
<proteinExistence type="evidence at transcript level"/>
<evidence type="ECO:0000250" key="1">
    <source>
        <dbReference type="UniProtKB" id="A5PF61"/>
    </source>
</evidence>
<evidence type="ECO:0000250" key="2">
    <source>
        <dbReference type="UniProtKB" id="Q4QRF7"/>
    </source>
</evidence>
<evidence type="ECO:0000255" key="3"/>
<evidence type="ECO:0000305" key="4"/>
<keyword id="KW-0217">Developmental protein</keyword>
<keyword id="KW-0325">Glycoprotein</keyword>
<keyword id="KW-1185">Reference proteome</keyword>
<keyword id="KW-0964">Secreted</keyword>
<keyword id="KW-0732">Signal</keyword>
<organism>
    <name type="scientific">Mus musculus</name>
    <name type="common">Mouse</name>
    <dbReference type="NCBI Taxonomy" id="10090"/>
    <lineage>
        <taxon>Eukaryota</taxon>
        <taxon>Metazoa</taxon>
        <taxon>Chordata</taxon>
        <taxon>Craniata</taxon>
        <taxon>Vertebrata</taxon>
        <taxon>Euteleostomi</taxon>
        <taxon>Mammalia</taxon>
        <taxon>Eutheria</taxon>
        <taxon>Euarchontoglires</taxon>
        <taxon>Glires</taxon>
        <taxon>Rodentia</taxon>
        <taxon>Myomorpha</taxon>
        <taxon>Muroidea</taxon>
        <taxon>Muridae</taxon>
        <taxon>Murinae</taxon>
        <taxon>Mus</taxon>
        <taxon>Mus</taxon>
    </lineage>
</organism>
<gene>
    <name evidence="1 2" type="primary">Leg1</name>
</gene>
<accession>Q8C6C9</accession>
<accession>Q8C6D2</accession>
<accession>Q8C6D6</accession>
<accession>Q8VDJ0</accession>
<accession>Q9CPV8</accession>
<accession>Q9CQ55</accession>
<accession>Q9D6S4</accession>
<accession>Q9D745</accession>
<accession>Q9D775</accession>
<accession>Q9D7F4</accession>
<accession>Q9D865</accession>
<name>LEG1H_MOUSE</name>
<sequence length="337" mass="38284">MAVLASWVWVLAGCFCAAVAEVSDSSDPYPPLWEDSPEQLSDYMMEDGNYIINPWVYTDRMGMYRILLEETAMYFAKYGPENEQNLLWGLPLQFGWQYQSGRLADPTGMTDCGNELNESLCVSVDSWWADINYYLSVIPFLAAVDSGITGISPNQITILPPPKDQMRFCYNVSDCQSAVPGTMNRWRDFFQYMQLNSSDFDGLLNYLWEAHASSLDYPTSAFGDRYNFYSEKEANFEENWAIAVNYLAAARLPTTQNRTYSFQRGLPPRVLVDTDIAPFIPDFTPLQNEVLVSLKLLGDTDRNSGSLSLTLWENLMSTKLARTLFLKAFEEFLATSS</sequence>
<dbReference type="EMBL" id="AK008407">
    <property type="protein sequence ID" value="BAB25653.1"/>
    <property type="molecule type" value="mRNA"/>
</dbReference>
<dbReference type="EMBL" id="AK009278">
    <property type="protein sequence ID" value="BAB26189.1"/>
    <property type="molecule type" value="mRNA"/>
</dbReference>
<dbReference type="EMBL" id="AK009369">
    <property type="protein sequence ID" value="BAB26247.1"/>
    <property type="molecule type" value="mRNA"/>
</dbReference>
<dbReference type="EMBL" id="AK009472">
    <property type="protein sequence ID" value="BAB26311.1"/>
    <property type="status" value="ALT_INIT"/>
    <property type="molecule type" value="mRNA"/>
</dbReference>
<dbReference type="EMBL" id="AK009516">
    <property type="protein sequence ID" value="BAB26334.1"/>
    <property type="molecule type" value="mRNA"/>
</dbReference>
<dbReference type="EMBL" id="AK009594">
    <property type="protein sequence ID" value="BAB26380.1"/>
    <property type="molecule type" value="mRNA"/>
</dbReference>
<dbReference type="EMBL" id="AK009610">
    <property type="protein sequence ID" value="BAB26391.1"/>
    <property type="molecule type" value="mRNA"/>
</dbReference>
<dbReference type="EMBL" id="AK009872">
    <property type="protein sequence ID" value="BAB26555.1"/>
    <property type="molecule type" value="mRNA"/>
</dbReference>
<dbReference type="EMBL" id="AK009911">
    <property type="protein sequence ID" value="BAB26580.1"/>
    <property type="molecule type" value="mRNA"/>
</dbReference>
<dbReference type="EMBL" id="AK009921">
    <property type="protein sequence ID" value="BAB26585.1"/>
    <property type="molecule type" value="mRNA"/>
</dbReference>
<dbReference type="EMBL" id="AK010028">
    <property type="protein sequence ID" value="BAB26653.1"/>
    <property type="molecule type" value="mRNA"/>
</dbReference>
<dbReference type="EMBL" id="AK010037">
    <property type="protein sequence ID" value="BAB26657.1"/>
    <property type="molecule type" value="mRNA"/>
</dbReference>
<dbReference type="EMBL" id="AK010047">
    <property type="protein sequence ID" value="BAB26664.1"/>
    <property type="status" value="ALT_INIT"/>
    <property type="molecule type" value="mRNA"/>
</dbReference>
<dbReference type="EMBL" id="AK010108">
    <property type="protein sequence ID" value="BAB26706.1"/>
    <property type="molecule type" value="mRNA"/>
</dbReference>
<dbReference type="EMBL" id="AK010222">
    <property type="protein sequence ID" value="BAB26777.1"/>
    <property type="molecule type" value="mRNA"/>
</dbReference>
<dbReference type="EMBL" id="AK075881">
    <property type="protein sequence ID" value="BAC36026.1"/>
    <property type="molecule type" value="mRNA"/>
</dbReference>
<dbReference type="EMBL" id="AK075892">
    <property type="protein sequence ID" value="BAC36034.1"/>
    <property type="molecule type" value="mRNA"/>
</dbReference>
<dbReference type="EMBL" id="AK075901">
    <property type="protein sequence ID" value="BAC36041.1"/>
    <property type="molecule type" value="mRNA"/>
</dbReference>
<dbReference type="EMBL" id="BC021783">
    <property type="protein sequence ID" value="AAH21783.1"/>
    <property type="status" value="ALT_INIT"/>
    <property type="molecule type" value="mRNA"/>
</dbReference>
<dbReference type="CCDS" id="CCDS23759.1"/>
<dbReference type="RefSeq" id="NP_080612.1">
    <property type="nucleotide sequence ID" value="NM_026336.3"/>
</dbReference>
<dbReference type="SMR" id="Q8C6C9"/>
<dbReference type="FunCoup" id="Q8C6C9">
    <property type="interactions" value="456"/>
</dbReference>
<dbReference type="STRING" id="10090.ENSMUSP00000015663"/>
<dbReference type="GlyCosmos" id="Q8C6C9">
    <property type="glycosylation" value="1 site, No reported glycans"/>
</dbReference>
<dbReference type="GlyGen" id="Q8C6C9">
    <property type="glycosylation" value="1 site"/>
</dbReference>
<dbReference type="PhosphoSitePlus" id="Q8C6C9"/>
<dbReference type="CPTAC" id="non-CPTAC-3469"/>
<dbReference type="PaxDb" id="10090-ENSMUSP00000015663"/>
<dbReference type="PeptideAtlas" id="Q8C6C9"/>
<dbReference type="Antibodypedia" id="49859">
    <property type="antibodies" value="157 antibodies from 16 providers"/>
</dbReference>
<dbReference type="DNASU" id="67719"/>
<dbReference type="Ensembl" id="ENSMUST00000015663.7">
    <property type="protein sequence ID" value="ENSMUSP00000015663.7"/>
    <property type="gene ID" value="ENSMUSG00000015519.13"/>
</dbReference>
<dbReference type="GeneID" id="67719"/>
<dbReference type="KEGG" id="mmu:67719"/>
<dbReference type="UCSC" id="uc007esr.2">
    <property type="organism name" value="mouse"/>
</dbReference>
<dbReference type="AGR" id="MGI:1914969"/>
<dbReference type="MGI" id="MGI:1914969">
    <property type="gene designation" value="2310057J18Rik"/>
</dbReference>
<dbReference type="VEuPathDB" id="HostDB:ENSMUSG00000015519"/>
<dbReference type="eggNOG" id="ENOG502QVPP">
    <property type="taxonomic scope" value="Eukaryota"/>
</dbReference>
<dbReference type="GeneTree" id="ENSGT00390000004904"/>
<dbReference type="HOGENOM" id="CLU_071068_0_0_1"/>
<dbReference type="InParanoid" id="Q8C6C9"/>
<dbReference type="OMA" id="PKLMDDW"/>
<dbReference type="OrthoDB" id="17046at2759"/>
<dbReference type="PhylomeDB" id="Q8C6C9"/>
<dbReference type="TreeFam" id="TF332991"/>
<dbReference type="BioGRID-ORCS" id="67719">
    <property type="hits" value="1 hit in 77 CRISPR screens"/>
</dbReference>
<dbReference type="ChiTaRS" id="2310057J18Rik">
    <property type="organism name" value="mouse"/>
</dbReference>
<dbReference type="PRO" id="PR:Q8C6C9"/>
<dbReference type="Proteomes" id="UP000000589">
    <property type="component" value="Chromosome 10"/>
</dbReference>
<dbReference type="RNAct" id="Q8C6C9">
    <property type="molecule type" value="protein"/>
</dbReference>
<dbReference type="Bgee" id="ENSMUSG00000015519">
    <property type="expression patterns" value="Expressed in parotid gland and 19 other cell types or tissues"/>
</dbReference>
<dbReference type="ExpressionAtlas" id="Q8C6C9">
    <property type="expression patterns" value="baseline and differential"/>
</dbReference>
<dbReference type="GO" id="GO:0005615">
    <property type="term" value="C:extracellular space"/>
    <property type="evidence" value="ECO:0007669"/>
    <property type="project" value="Ensembl"/>
</dbReference>
<dbReference type="InterPro" id="IPR008499">
    <property type="entry name" value="Leg1"/>
</dbReference>
<dbReference type="PANTHER" id="PTHR18820">
    <property type="entry name" value="LEG1"/>
    <property type="match status" value="1"/>
</dbReference>
<dbReference type="PANTHER" id="PTHR18820:SF1">
    <property type="entry name" value="PROTEIN LEG1 HOMOLOG"/>
    <property type="match status" value="1"/>
</dbReference>
<dbReference type="Pfam" id="PF05612">
    <property type="entry name" value="Leg1"/>
    <property type="match status" value="1"/>
</dbReference>
<protein>
    <recommendedName>
        <fullName evidence="1 2">Protein LEG1 homolog</fullName>
    </recommendedName>
</protein>
<feature type="signal peptide" evidence="3">
    <location>
        <begin position="1"/>
        <end position="20"/>
    </location>
</feature>
<feature type="chain" id="PRO_0000252386" description="Protein LEG1 homolog">
    <location>
        <begin position="21"/>
        <end position="337"/>
    </location>
</feature>
<feature type="glycosylation site" description="N-linked (GlcNAc...) asparagine" evidence="3">
    <location>
        <position position="171"/>
    </location>
</feature>
<feature type="sequence conflict" description="In Ref. 1; BAB26334/BAC36026." evidence="4" ref="1">
    <original>A</original>
    <variation>S</variation>
    <location>
        <position position="20"/>
    </location>
</feature>
<feature type="sequence conflict" description="In Ref. 1; BAC36026." evidence="4" ref="1">
    <original>E</original>
    <variation>G</variation>
    <location>
        <position position="21"/>
    </location>
</feature>
<feature type="sequence conflict" description="In Ref. 1; BAC36026." evidence="4" ref="1">
    <original>I</original>
    <variation>K</variation>
    <location>
        <position position="51"/>
    </location>
</feature>
<feature type="sequence conflict" description="In Ref. 1; BAC36026." evidence="4" ref="1">
    <original>R</original>
    <variation>K</variation>
    <location>
        <position position="60"/>
    </location>
</feature>
<feature type="sequence conflict" description="In Ref. 1; BAC36026." evidence="4" ref="1">
    <original>R</original>
    <variation>K</variation>
    <location>
        <position position="65"/>
    </location>
</feature>
<feature type="sequence conflict" description="In Ref. 1; BAC36026." evidence="4" ref="1">
    <original>D</original>
    <variation>N</variation>
    <location>
        <position position="111"/>
    </location>
</feature>
<feature type="sequence conflict" description="In Ref. 1; BAB26334/BAC36026." evidence="4" ref="1">
    <original>T</original>
    <variation>M</variation>
    <location>
        <position position="157"/>
    </location>
</feature>
<feature type="sequence conflict" description="In Ref. 1; BAB26189." evidence="4" ref="1">
    <original>F</original>
    <variation>C</variation>
    <location>
        <position position="262"/>
    </location>
</feature>
<feature type="sequence conflict" description="In Ref. 1; BAB26391." evidence="4" ref="1">
    <original>T</original>
    <variation>A</variation>
    <location>
        <position position="274"/>
    </location>
</feature>
<feature type="sequence conflict" description="In Ref. 1; BAB25653." evidence="4" ref="1">
    <original>D</original>
    <variation>E</variation>
    <location>
        <position position="301"/>
    </location>
</feature>
<feature type="sequence conflict" description="In Ref. 1; BAB26653." evidence="4" ref="1">
    <original>F</original>
    <variation>S</variation>
    <location>
        <position position="332"/>
    </location>
</feature>
<feature type="sequence conflict" description="In Ref. 2; AAH21783." evidence="4" ref="2">
    <original>A</original>
    <variation>V</variation>
    <location>
        <position position="334"/>
    </location>
</feature>
<reference key="1">
    <citation type="journal article" date="2005" name="Science">
        <title>The transcriptional landscape of the mammalian genome.</title>
        <authorList>
            <person name="Carninci P."/>
            <person name="Kasukawa T."/>
            <person name="Katayama S."/>
            <person name="Gough J."/>
            <person name="Frith M.C."/>
            <person name="Maeda N."/>
            <person name="Oyama R."/>
            <person name="Ravasi T."/>
            <person name="Lenhard B."/>
            <person name="Wells C."/>
            <person name="Kodzius R."/>
            <person name="Shimokawa K."/>
            <person name="Bajic V.B."/>
            <person name="Brenner S.E."/>
            <person name="Batalov S."/>
            <person name="Forrest A.R."/>
            <person name="Zavolan M."/>
            <person name="Davis M.J."/>
            <person name="Wilming L.G."/>
            <person name="Aidinis V."/>
            <person name="Allen J.E."/>
            <person name="Ambesi-Impiombato A."/>
            <person name="Apweiler R."/>
            <person name="Aturaliya R.N."/>
            <person name="Bailey T.L."/>
            <person name="Bansal M."/>
            <person name="Baxter L."/>
            <person name="Beisel K.W."/>
            <person name="Bersano T."/>
            <person name="Bono H."/>
            <person name="Chalk A.M."/>
            <person name="Chiu K.P."/>
            <person name="Choudhary V."/>
            <person name="Christoffels A."/>
            <person name="Clutterbuck D.R."/>
            <person name="Crowe M.L."/>
            <person name="Dalla E."/>
            <person name="Dalrymple B.P."/>
            <person name="de Bono B."/>
            <person name="Della Gatta G."/>
            <person name="di Bernardo D."/>
            <person name="Down T."/>
            <person name="Engstrom P."/>
            <person name="Fagiolini M."/>
            <person name="Faulkner G."/>
            <person name="Fletcher C.F."/>
            <person name="Fukushima T."/>
            <person name="Furuno M."/>
            <person name="Futaki S."/>
            <person name="Gariboldi M."/>
            <person name="Georgii-Hemming P."/>
            <person name="Gingeras T.R."/>
            <person name="Gojobori T."/>
            <person name="Green R.E."/>
            <person name="Gustincich S."/>
            <person name="Harbers M."/>
            <person name="Hayashi Y."/>
            <person name="Hensch T.K."/>
            <person name="Hirokawa N."/>
            <person name="Hill D."/>
            <person name="Huminiecki L."/>
            <person name="Iacono M."/>
            <person name="Ikeo K."/>
            <person name="Iwama A."/>
            <person name="Ishikawa T."/>
            <person name="Jakt M."/>
            <person name="Kanapin A."/>
            <person name="Katoh M."/>
            <person name="Kawasawa Y."/>
            <person name="Kelso J."/>
            <person name="Kitamura H."/>
            <person name="Kitano H."/>
            <person name="Kollias G."/>
            <person name="Krishnan S.P."/>
            <person name="Kruger A."/>
            <person name="Kummerfeld S.K."/>
            <person name="Kurochkin I.V."/>
            <person name="Lareau L.F."/>
            <person name="Lazarevic D."/>
            <person name="Lipovich L."/>
            <person name="Liu J."/>
            <person name="Liuni S."/>
            <person name="McWilliam S."/>
            <person name="Madan Babu M."/>
            <person name="Madera M."/>
            <person name="Marchionni L."/>
            <person name="Matsuda H."/>
            <person name="Matsuzawa S."/>
            <person name="Miki H."/>
            <person name="Mignone F."/>
            <person name="Miyake S."/>
            <person name="Morris K."/>
            <person name="Mottagui-Tabar S."/>
            <person name="Mulder N."/>
            <person name="Nakano N."/>
            <person name="Nakauchi H."/>
            <person name="Ng P."/>
            <person name="Nilsson R."/>
            <person name="Nishiguchi S."/>
            <person name="Nishikawa S."/>
            <person name="Nori F."/>
            <person name="Ohara O."/>
            <person name="Okazaki Y."/>
            <person name="Orlando V."/>
            <person name="Pang K.C."/>
            <person name="Pavan W.J."/>
            <person name="Pavesi G."/>
            <person name="Pesole G."/>
            <person name="Petrovsky N."/>
            <person name="Piazza S."/>
            <person name="Reed J."/>
            <person name="Reid J.F."/>
            <person name="Ring B.Z."/>
            <person name="Ringwald M."/>
            <person name="Rost B."/>
            <person name="Ruan Y."/>
            <person name="Salzberg S.L."/>
            <person name="Sandelin A."/>
            <person name="Schneider C."/>
            <person name="Schoenbach C."/>
            <person name="Sekiguchi K."/>
            <person name="Semple C.A."/>
            <person name="Seno S."/>
            <person name="Sessa L."/>
            <person name="Sheng Y."/>
            <person name="Shibata Y."/>
            <person name="Shimada H."/>
            <person name="Shimada K."/>
            <person name="Silva D."/>
            <person name="Sinclair B."/>
            <person name="Sperling S."/>
            <person name="Stupka E."/>
            <person name="Sugiura K."/>
            <person name="Sultana R."/>
            <person name="Takenaka Y."/>
            <person name="Taki K."/>
            <person name="Tammoja K."/>
            <person name="Tan S.L."/>
            <person name="Tang S."/>
            <person name="Taylor M.S."/>
            <person name="Tegner J."/>
            <person name="Teichmann S.A."/>
            <person name="Ueda H.R."/>
            <person name="van Nimwegen E."/>
            <person name="Verardo R."/>
            <person name="Wei C.L."/>
            <person name="Yagi K."/>
            <person name="Yamanishi H."/>
            <person name="Zabarovsky E."/>
            <person name="Zhu S."/>
            <person name="Zimmer A."/>
            <person name="Hide W."/>
            <person name="Bult C."/>
            <person name="Grimmond S.M."/>
            <person name="Teasdale R.D."/>
            <person name="Liu E.T."/>
            <person name="Brusic V."/>
            <person name="Quackenbush J."/>
            <person name="Wahlestedt C."/>
            <person name="Mattick J.S."/>
            <person name="Hume D.A."/>
            <person name="Kai C."/>
            <person name="Sasaki D."/>
            <person name="Tomaru Y."/>
            <person name="Fukuda S."/>
            <person name="Kanamori-Katayama M."/>
            <person name="Suzuki M."/>
            <person name="Aoki J."/>
            <person name="Arakawa T."/>
            <person name="Iida J."/>
            <person name="Imamura K."/>
            <person name="Itoh M."/>
            <person name="Kato T."/>
            <person name="Kawaji H."/>
            <person name="Kawagashira N."/>
            <person name="Kawashima T."/>
            <person name="Kojima M."/>
            <person name="Kondo S."/>
            <person name="Konno H."/>
            <person name="Nakano K."/>
            <person name="Ninomiya N."/>
            <person name="Nishio T."/>
            <person name="Okada M."/>
            <person name="Plessy C."/>
            <person name="Shibata K."/>
            <person name="Shiraki T."/>
            <person name="Suzuki S."/>
            <person name="Tagami M."/>
            <person name="Waki K."/>
            <person name="Watahiki A."/>
            <person name="Okamura-Oho Y."/>
            <person name="Suzuki H."/>
            <person name="Kawai J."/>
            <person name="Hayashizaki Y."/>
        </authorList>
    </citation>
    <scope>NUCLEOTIDE SEQUENCE [LARGE SCALE MRNA]</scope>
    <source>
        <strain>C57BL/6J</strain>
        <tissue>Small intestine</tissue>
        <tissue>Tongue</tissue>
    </source>
</reference>
<reference key="2">
    <citation type="journal article" date="2004" name="Genome Res.">
        <title>The status, quality, and expansion of the NIH full-length cDNA project: the Mammalian Gene Collection (MGC).</title>
        <authorList>
            <consortium name="The MGC Project Team"/>
        </authorList>
    </citation>
    <scope>NUCLEOTIDE SEQUENCE [LARGE SCALE MRNA] OF 2-337</scope>
    <source>
        <strain>FVB/N</strain>
        <tissue>Mammary tumor</tissue>
    </source>
</reference>